<name>TOLB_PASMU</name>
<proteinExistence type="inferred from homology"/>
<sequence>MKLVTRMWSILIVFFLAVLQPAQAEVRIVIDEGVDSARPIAVVPFKWNGPGSAPADIADIIAADLRHSGKFNPIPVNRMPQHPTSVSEVNPEAWAALGIDAVVVGHVTPANGSFNIAYQLVDTIGATGTAGTVLTQNQYTVTAKWLRYGAHTVSDEVFEKLTGIRGAFRTRIAYIVQKHGGSQPYEVRVSDYDGFNQFVVNRSAQPLMSPAWSHDGKKLAYVSFENKKSQLVVQDLGSGARKVVASFNGHNGAPAFSPDGSRLAFASSKDGVLNIYVMNLGSGQISQLTSGTGNNTEPSWSPDGQTIVFTSDRSGSPQVYQMSASGGGASLVSTGGRSYSGQMTADGSAIIMISRDNIVKKDLASGSTEVLSSTFLDENPSISPNGIMIIYSSTQGLGKVLQLVSADGRFKARLPGNDGQVKFPAWSPYLTK</sequence>
<comment type="function">
    <text evidence="1">Part of the Tol-Pal system, which plays a role in outer membrane invagination during cell division and is important for maintaining outer membrane integrity.</text>
</comment>
<comment type="subunit">
    <text evidence="1">The Tol-Pal system is composed of five core proteins: the inner membrane proteins TolA, TolQ and TolR, the periplasmic protein TolB and the outer membrane protein Pal. They form a network linking the inner and outer membranes and the peptidoglycan layer.</text>
</comment>
<comment type="subcellular location">
    <subcellularLocation>
        <location evidence="1">Periplasm</location>
    </subcellularLocation>
</comment>
<comment type="similarity">
    <text evidence="1">Belongs to the TolB family.</text>
</comment>
<dbReference type="EMBL" id="AE004439">
    <property type="protein sequence ID" value="AAK03051.1"/>
    <property type="molecule type" value="Genomic_DNA"/>
</dbReference>
<dbReference type="RefSeq" id="WP_010906946.1">
    <property type="nucleotide sequence ID" value="NC_002663.1"/>
</dbReference>
<dbReference type="SMR" id="Q9CM71"/>
<dbReference type="STRING" id="272843.PM0967"/>
<dbReference type="EnsemblBacteria" id="AAK03051">
    <property type="protein sequence ID" value="AAK03051"/>
    <property type="gene ID" value="PM0967"/>
</dbReference>
<dbReference type="KEGG" id="pmu:PM0967"/>
<dbReference type="PATRIC" id="fig|272843.6.peg.979"/>
<dbReference type="HOGENOM" id="CLU_047123_0_0_6"/>
<dbReference type="OrthoDB" id="9802240at2"/>
<dbReference type="Proteomes" id="UP000000809">
    <property type="component" value="Chromosome"/>
</dbReference>
<dbReference type="GO" id="GO:0042597">
    <property type="term" value="C:periplasmic space"/>
    <property type="evidence" value="ECO:0007669"/>
    <property type="project" value="UniProtKB-SubCell"/>
</dbReference>
<dbReference type="GO" id="GO:0051301">
    <property type="term" value="P:cell division"/>
    <property type="evidence" value="ECO:0007669"/>
    <property type="project" value="UniProtKB-UniRule"/>
</dbReference>
<dbReference type="GO" id="GO:0017038">
    <property type="term" value="P:protein import"/>
    <property type="evidence" value="ECO:0007669"/>
    <property type="project" value="InterPro"/>
</dbReference>
<dbReference type="Gene3D" id="2.120.10.30">
    <property type="entry name" value="TolB, C-terminal domain"/>
    <property type="match status" value="1"/>
</dbReference>
<dbReference type="Gene3D" id="3.40.50.10070">
    <property type="entry name" value="TolB, N-terminal domain"/>
    <property type="match status" value="1"/>
</dbReference>
<dbReference type="HAMAP" id="MF_00671">
    <property type="entry name" value="TolB"/>
    <property type="match status" value="1"/>
</dbReference>
<dbReference type="InterPro" id="IPR011042">
    <property type="entry name" value="6-blade_b-propeller_TolB-like"/>
</dbReference>
<dbReference type="InterPro" id="IPR011659">
    <property type="entry name" value="PD40"/>
</dbReference>
<dbReference type="InterPro" id="IPR014167">
    <property type="entry name" value="Tol-Pal_TolB"/>
</dbReference>
<dbReference type="InterPro" id="IPR007195">
    <property type="entry name" value="TolB_N"/>
</dbReference>
<dbReference type="NCBIfam" id="TIGR02800">
    <property type="entry name" value="propeller_TolB"/>
    <property type="match status" value="1"/>
</dbReference>
<dbReference type="PANTHER" id="PTHR36842:SF1">
    <property type="entry name" value="PROTEIN TOLB"/>
    <property type="match status" value="1"/>
</dbReference>
<dbReference type="PANTHER" id="PTHR36842">
    <property type="entry name" value="PROTEIN TOLB HOMOLOG"/>
    <property type="match status" value="1"/>
</dbReference>
<dbReference type="Pfam" id="PF07676">
    <property type="entry name" value="PD40"/>
    <property type="match status" value="4"/>
</dbReference>
<dbReference type="Pfam" id="PF04052">
    <property type="entry name" value="TolB_N"/>
    <property type="match status" value="1"/>
</dbReference>
<dbReference type="SUPFAM" id="SSF52964">
    <property type="entry name" value="TolB, N-terminal domain"/>
    <property type="match status" value="1"/>
</dbReference>
<dbReference type="SUPFAM" id="SSF69304">
    <property type="entry name" value="Tricorn protease N-terminal domain"/>
    <property type="match status" value="1"/>
</dbReference>
<reference key="1">
    <citation type="journal article" date="2001" name="Proc. Natl. Acad. Sci. U.S.A.">
        <title>Complete genomic sequence of Pasteurella multocida Pm70.</title>
        <authorList>
            <person name="May B.J."/>
            <person name="Zhang Q."/>
            <person name="Li L.L."/>
            <person name="Paustian M.L."/>
            <person name="Whittam T.S."/>
            <person name="Kapur V."/>
        </authorList>
    </citation>
    <scope>NUCLEOTIDE SEQUENCE [LARGE SCALE GENOMIC DNA]</scope>
    <source>
        <strain>Pm70</strain>
    </source>
</reference>
<keyword id="KW-0131">Cell cycle</keyword>
<keyword id="KW-0132">Cell division</keyword>
<keyword id="KW-0574">Periplasm</keyword>
<keyword id="KW-1185">Reference proteome</keyword>
<keyword id="KW-0732">Signal</keyword>
<evidence type="ECO:0000255" key="1">
    <source>
        <dbReference type="HAMAP-Rule" id="MF_00671"/>
    </source>
</evidence>
<organism>
    <name type="scientific">Pasteurella multocida (strain Pm70)</name>
    <dbReference type="NCBI Taxonomy" id="272843"/>
    <lineage>
        <taxon>Bacteria</taxon>
        <taxon>Pseudomonadati</taxon>
        <taxon>Pseudomonadota</taxon>
        <taxon>Gammaproteobacteria</taxon>
        <taxon>Pasteurellales</taxon>
        <taxon>Pasteurellaceae</taxon>
        <taxon>Pasteurella</taxon>
    </lineage>
</organism>
<protein>
    <recommendedName>
        <fullName evidence="1">Tol-Pal system protein TolB</fullName>
    </recommendedName>
</protein>
<feature type="signal peptide" evidence="1">
    <location>
        <begin position="1"/>
        <end position="24"/>
    </location>
</feature>
<feature type="chain" id="PRO_0000034669" description="Tol-Pal system protein TolB" evidence="1">
    <location>
        <begin position="25"/>
        <end position="432"/>
    </location>
</feature>
<accession>Q9CM71</accession>
<gene>
    <name evidence="1" type="primary">tolB</name>
    <name type="ordered locus">PM0967</name>
</gene>